<accession>Q9CPW7</accession>
<accession>Q5EBK0</accession>
<organism>
    <name type="scientific">Mus musculus</name>
    <name type="common">Mouse</name>
    <dbReference type="NCBI Taxonomy" id="10090"/>
    <lineage>
        <taxon>Eukaryota</taxon>
        <taxon>Metazoa</taxon>
        <taxon>Chordata</taxon>
        <taxon>Craniata</taxon>
        <taxon>Vertebrata</taxon>
        <taxon>Euteleostomi</taxon>
        <taxon>Mammalia</taxon>
        <taxon>Eutheria</taxon>
        <taxon>Euarchontoglires</taxon>
        <taxon>Glires</taxon>
        <taxon>Rodentia</taxon>
        <taxon>Myomorpha</taxon>
        <taxon>Muroidea</taxon>
        <taxon>Muridae</taxon>
        <taxon>Murinae</taxon>
        <taxon>Mus</taxon>
        <taxon>Mus</taxon>
    </lineage>
</organism>
<dbReference type="EMBL" id="AK008717">
    <property type="protein sequence ID" value="BAB25852.1"/>
    <property type="molecule type" value="mRNA"/>
</dbReference>
<dbReference type="EMBL" id="AK012091">
    <property type="protein sequence ID" value="BAB28023.1"/>
    <property type="molecule type" value="mRNA"/>
</dbReference>
<dbReference type="EMBL" id="BC024881">
    <property type="protein sequence ID" value="AAH24881.1"/>
    <property type="molecule type" value="mRNA"/>
</dbReference>
<dbReference type="EMBL" id="BC089501">
    <property type="protein sequence ID" value="AAH89501.1"/>
    <property type="molecule type" value="mRNA"/>
</dbReference>
<dbReference type="CCDS" id="CCDS37773.1"/>
<dbReference type="RefSeq" id="NP_079870.1">
    <property type="nucleotide sequence ID" value="NM_025594.3"/>
</dbReference>
<dbReference type="SMR" id="Q9CPW7"/>
<dbReference type="BioGRID" id="211513">
    <property type="interactions" value="8"/>
</dbReference>
<dbReference type="FunCoup" id="Q9CPW7">
    <property type="interactions" value="2103"/>
</dbReference>
<dbReference type="STRING" id="10090.ENSMUSP00000001419"/>
<dbReference type="PhosphoSitePlus" id="Q9CPW7"/>
<dbReference type="PaxDb" id="10090-ENSMUSP00000001419"/>
<dbReference type="PeptideAtlas" id="Q9CPW7"/>
<dbReference type="ProteomicsDB" id="302063"/>
<dbReference type="Pumba" id="Q9CPW7"/>
<dbReference type="Antibodypedia" id="27104">
    <property type="antibodies" value="166 antibodies from 24 providers"/>
</dbReference>
<dbReference type="DNASU" id="66492"/>
<dbReference type="Ensembl" id="ENSMUST00000001419.10">
    <property type="protein sequence ID" value="ENSMUSP00000001419.9"/>
    <property type="gene ID" value="ENSMUSG00000001383.10"/>
</dbReference>
<dbReference type="GeneID" id="66492"/>
<dbReference type="KEGG" id="mmu:66492"/>
<dbReference type="UCSC" id="uc008eos.1">
    <property type="organism name" value="mouse"/>
</dbReference>
<dbReference type="AGR" id="MGI:1913742"/>
<dbReference type="CTD" id="153527"/>
<dbReference type="MGI" id="MGI:1913742">
    <property type="gene designation" value="Zmat2"/>
</dbReference>
<dbReference type="VEuPathDB" id="HostDB:ENSMUSG00000001383"/>
<dbReference type="eggNOG" id="KOG4727">
    <property type="taxonomic scope" value="Eukaryota"/>
</dbReference>
<dbReference type="GeneTree" id="ENSGT00390000010712"/>
<dbReference type="HOGENOM" id="CLU_067237_1_1_1"/>
<dbReference type="InParanoid" id="Q9CPW7"/>
<dbReference type="OMA" id="VDHRRKW"/>
<dbReference type="OrthoDB" id="30343at2759"/>
<dbReference type="PhylomeDB" id="Q9CPW7"/>
<dbReference type="TreeFam" id="TF314475"/>
<dbReference type="Reactome" id="R-MMU-72163">
    <property type="pathway name" value="mRNA Splicing - Major Pathway"/>
</dbReference>
<dbReference type="BioGRID-ORCS" id="66492">
    <property type="hits" value="23 hits in 79 CRISPR screens"/>
</dbReference>
<dbReference type="ChiTaRS" id="Zmat2">
    <property type="organism name" value="mouse"/>
</dbReference>
<dbReference type="PRO" id="PR:Q9CPW7"/>
<dbReference type="Proteomes" id="UP000000589">
    <property type="component" value="Chromosome 18"/>
</dbReference>
<dbReference type="RNAct" id="Q9CPW7">
    <property type="molecule type" value="protein"/>
</dbReference>
<dbReference type="Bgee" id="ENSMUSG00000001383">
    <property type="expression patterns" value="Expressed in motor neuron and 260 other cell types or tissues"/>
</dbReference>
<dbReference type="GO" id="GO:0005634">
    <property type="term" value="C:nucleus"/>
    <property type="evidence" value="ECO:0000250"/>
    <property type="project" value="UniProtKB"/>
</dbReference>
<dbReference type="GO" id="GO:0071005">
    <property type="term" value="C:U2-type precatalytic spliceosome"/>
    <property type="evidence" value="ECO:0000250"/>
    <property type="project" value="UniProtKB"/>
</dbReference>
<dbReference type="GO" id="GO:0003677">
    <property type="term" value="F:DNA binding"/>
    <property type="evidence" value="ECO:0007669"/>
    <property type="project" value="UniProtKB-KW"/>
</dbReference>
<dbReference type="GO" id="GO:0008270">
    <property type="term" value="F:zinc ion binding"/>
    <property type="evidence" value="ECO:0007669"/>
    <property type="project" value="UniProtKB-KW"/>
</dbReference>
<dbReference type="GO" id="GO:0000398">
    <property type="term" value="P:mRNA splicing, via spliceosome"/>
    <property type="evidence" value="ECO:0000250"/>
    <property type="project" value="UniProtKB"/>
</dbReference>
<dbReference type="FunFam" id="3.30.160.60:FF:000282">
    <property type="entry name" value="Zinc finger, matrin-type 2"/>
    <property type="match status" value="1"/>
</dbReference>
<dbReference type="Gene3D" id="3.30.160.60">
    <property type="entry name" value="Classic Zinc Finger"/>
    <property type="match status" value="1"/>
</dbReference>
<dbReference type="InterPro" id="IPR003604">
    <property type="entry name" value="Matrin/U1-like-C_Znf_C2H2"/>
</dbReference>
<dbReference type="InterPro" id="IPR040107">
    <property type="entry name" value="Snu23"/>
</dbReference>
<dbReference type="InterPro" id="IPR022755">
    <property type="entry name" value="Znf_C2H2_jaz"/>
</dbReference>
<dbReference type="InterPro" id="IPR036236">
    <property type="entry name" value="Znf_C2H2_sf"/>
</dbReference>
<dbReference type="PANTHER" id="PTHR45986">
    <property type="entry name" value="ZINC FINGER MATRIN-TYPE PROTEIN 2"/>
    <property type="match status" value="1"/>
</dbReference>
<dbReference type="PANTHER" id="PTHR45986:SF1">
    <property type="entry name" value="ZINC FINGER MATRIN-TYPE PROTEIN 2"/>
    <property type="match status" value="1"/>
</dbReference>
<dbReference type="Pfam" id="PF12171">
    <property type="entry name" value="zf-C2H2_jaz"/>
    <property type="match status" value="1"/>
</dbReference>
<dbReference type="SMART" id="SM00451">
    <property type="entry name" value="ZnF_U1"/>
    <property type="match status" value="1"/>
</dbReference>
<dbReference type="SUPFAM" id="SSF57667">
    <property type="entry name" value="beta-beta-alpha zinc fingers"/>
    <property type="match status" value="1"/>
</dbReference>
<gene>
    <name type="primary">Zmat2</name>
</gene>
<evidence type="ECO:0000250" key="1">
    <source>
        <dbReference type="UniProtKB" id="Q96NC0"/>
    </source>
</evidence>
<evidence type="ECO:0000256" key="2">
    <source>
        <dbReference type="SAM" id="MobiDB-lite"/>
    </source>
</evidence>
<protein>
    <recommendedName>
        <fullName>Zinc finger matrin-type protein 2</fullName>
    </recommendedName>
</protein>
<sequence length="199" mass="23612">MASGSGTKNLDFRRKWDKDEYEKLAEKRLTEEREKKDGKPVQPVKRELLRHRDYKVDLESKLGKTIVITKTTPQSEMGGYYCNVCDCVVKDSINFLDHINGKKHQRNLGMSMRVERSTLDQVKKRFEVNKKKMEEKQKDYDFEERMKELREEEEKAKAYKKEKQKEKKRRAEEDLTFEEDDEMAAVMGFSGFGSTKKSY</sequence>
<keyword id="KW-0007">Acetylation</keyword>
<keyword id="KW-0238">DNA-binding</keyword>
<keyword id="KW-1017">Isopeptide bond</keyword>
<keyword id="KW-0479">Metal-binding</keyword>
<keyword id="KW-0507">mRNA processing</keyword>
<keyword id="KW-0508">mRNA splicing</keyword>
<keyword id="KW-0539">Nucleus</keyword>
<keyword id="KW-1185">Reference proteome</keyword>
<keyword id="KW-0747">Spliceosome</keyword>
<keyword id="KW-0832">Ubl conjugation</keyword>
<keyword id="KW-0862">Zinc</keyword>
<keyword id="KW-0863">Zinc-finger</keyword>
<proteinExistence type="evidence at transcript level"/>
<feature type="initiator methionine" description="Removed" evidence="1">
    <location>
        <position position="1"/>
    </location>
</feature>
<feature type="chain" id="PRO_0000047328" description="Zinc finger matrin-type protein 2">
    <location>
        <begin position="2"/>
        <end position="199"/>
    </location>
</feature>
<feature type="zinc finger region" description="Matrin-type">
    <location>
        <begin position="80"/>
        <end position="104"/>
    </location>
</feature>
<feature type="region of interest" description="Disordered" evidence="2">
    <location>
        <begin position="27"/>
        <end position="46"/>
    </location>
</feature>
<feature type="region of interest" description="Disordered" evidence="2">
    <location>
        <begin position="150"/>
        <end position="175"/>
    </location>
</feature>
<feature type="compositionally biased region" description="Basic and acidic residues" evidence="2">
    <location>
        <begin position="150"/>
        <end position="173"/>
    </location>
</feature>
<feature type="modified residue" description="N-acetylalanine" evidence="1">
    <location>
        <position position="2"/>
    </location>
</feature>
<feature type="cross-link" description="Glycyl lysine isopeptide (Lys-Gly) (interchain with G-Cter in SUMO2)" evidence="1">
    <location>
        <position position="8"/>
    </location>
</feature>
<feature type="cross-link" description="Glycyl lysine isopeptide (Lys-Gly) (interchain with G-Cter in SUMO2)" evidence="1">
    <location>
        <position position="36"/>
    </location>
</feature>
<feature type="cross-link" description="Glycyl lysine isopeptide (Lys-Gly) (interchain with G-Cter in SUMO2)" evidence="1">
    <location>
        <position position="39"/>
    </location>
</feature>
<feature type="cross-link" description="Glycyl lysine isopeptide (Lys-Gly) (interchain with G-Cter in SUMO2)" evidence="1">
    <location>
        <position position="45"/>
    </location>
</feature>
<feature type="cross-link" description="Glycyl lysine isopeptide (Lys-Gly) (interchain with G-Cter in SUMO2)" evidence="1">
    <location>
        <position position="55"/>
    </location>
</feature>
<feature type="cross-link" description="Glycyl lysine isopeptide (Lys-Gly) (interchain with G-Cter in SUMO2)" evidence="1">
    <location>
        <position position="61"/>
    </location>
</feature>
<feature type="cross-link" description="Glycyl lysine isopeptide (Lys-Gly) (interchain with G-Cter in SUMO2)" evidence="1">
    <location>
        <position position="64"/>
    </location>
</feature>
<feature type="cross-link" description="Glycyl lysine isopeptide (Lys-Gly) (interchain with G-Cter in SUMO2)" evidence="1">
    <location>
        <position position="70"/>
    </location>
</feature>
<feature type="cross-link" description="Glycyl lysine isopeptide (Lys-Gly) (interchain with G-Cter in SUMO2)" evidence="1">
    <location>
        <position position="102"/>
    </location>
</feature>
<feature type="cross-link" description="Glycyl lysine isopeptide (Lys-Gly) (interchain with G-Cter in SUMO2)" evidence="1">
    <location>
        <position position="123"/>
    </location>
</feature>
<name>ZMAT2_MOUSE</name>
<reference key="1">
    <citation type="journal article" date="2005" name="Science">
        <title>The transcriptional landscape of the mammalian genome.</title>
        <authorList>
            <person name="Carninci P."/>
            <person name="Kasukawa T."/>
            <person name="Katayama S."/>
            <person name="Gough J."/>
            <person name="Frith M.C."/>
            <person name="Maeda N."/>
            <person name="Oyama R."/>
            <person name="Ravasi T."/>
            <person name="Lenhard B."/>
            <person name="Wells C."/>
            <person name="Kodzius R."/>
            <person name="Shimokawa K."/>
            <person name="Bajic V.B."/>
            <person name="Brenner S.E."/>
            <person name="Batalov S."/>
            <person name="Forrest A.R."/>
            <person name="Zavolan M."/>
            <person name="Davis M.J."/>
            <person name="Wilming L.G."/>
            <person name="Aidinis V."/>
            <person name="Allen J.E."/>
            <person name="Ambesi-Impiombato A."/>
            <person name="Apweiler R."/>
            <person name="Aturaliya R.N."/>
            <person name="Bailey T.L."/>
            <person name="Bansal M."/>
            <person name="Baxter L."/>
            <person name="Beisel K.W."/>
            <person name="Bersano T."/>
            <person name="Bono H."/>
            <person name="Chalk A.M."/>
            <person name="Chiu K.P."/>
            <person name="Choudhary V."/>
            <person name="Christoffels A."/>
            <person name="Clutterbuck D.R."/>
            <person name="Crowe M.L."/>
            <person name="Dalla E."/>
            <person name="Dalrymple B.P."/>
            <person name="de Bono B."/>
            <person name="Della Gatta G."/>
            <person name="di Bernardo D."/>
            <person name="Down T."/>
            <person name="Engstrom P."/>
            <person name="Fagiolini M."/>
            <person name="Faulkner G."/>
            <person name="Fletcher C.F."/>
            <person name="Fukushima T."/>
            <person name="Furuno M."/>
            <person name="Futaki S."/>
            <person name="Gariboldi M."/>
            <person name="Georgii-Hemming P."/>
            <person name="Gingeras T.R."/>
            <person name="Gojobori T."/>
            <person name="Green R.E."/>
            <person name="Gustincich S."/>
            <person name="Harbers M."/>
            <person name="Hayashi Y."/>
            <person name="Hensch T.K."/>
            <person name="Hirokawa N."/>
            <person name="Hill D."/>
            <person name="Huminiecki L."/>
            <person name="Iacono M."/>
            <person name="Ikeo K."/>
            <person name="Iwama A."/>
            <person name="Ishikawa T."/>
            <person name="Jakt M."/>
            <person name="Kanapin A."/>
            <person name="Katoh M."/>
            <person name="Kawasawa Y."/>
            <person name="Kelso J."/>
            <person name="Kitamura H."/>
            <person name="Kitano H."/>
            <person name="Kollias G."/>
            <person name="Krishnan S.P."/>
            <person name="Kruger A."/>
            <person name="Kummerfeld S.K."/>
            <person name="Kurochkin I.V."/>
            <person name="Lareau L.F."/>
            <person name="Lazarevic D."/>
            <person name="Lipovich L."/>
            <person name="Liu J."/>
            <person name="Liuni S."/>
            <person name="McWilliam S."/>
            <person name="Madan Babu M."/>
            <person name="Madera M."/>
            <person name="Marchionni L."/>
            <person name="Matsuda H."/>
            <person name="Matsuzawa S."/>
            <person name="Miki H."/>
            <person name="Mignone F."/>
            <person name="Miyake S."/>
            <person name="Morris K."/>
            <person name="Mottagui-Tabar S."/>
            <person name="Mulder N."/>
            <person name="Nakano N."/>
            <person name="Nakauchi H."/>
            <person name="Ng P."/>
            <person name="Nilsson R."/>
            <person name="Nishiguchi S."/>
            <person name="Nishikawa S."/>
            <person name="Nori F."/>
            <person name="Ohara O."/>
            <person name="Okazaki Y."/>
            <person name="Orlando V."/>
            <person name="Pang K.C."/>
            <person name="Pavan W.J."/>
            <person name="Pavesi G."/>
            <person name="Pesole G."/>
            <person name="Petrovsky N."/>
            <person name="Piazza S."/>
            <person name="Reed J."/>
            <person name="Reid J.F."/>
            <person name="Ring B.Z."/>
            <person name="Ringwald M."/>
            <person name="Rost B."/>
            <person name="Ruan Y."/>
            <person name="Salzberg S.L."/>
            <person name="Sandelin A."/>
            <person name="Schneider C."/>
            <person name="Schoenbach C."/>
            <person name="Sekiguchi K."/>
            <person name="Semple C.A."/>
            <person name="Seno S."/>
            <person name="Sessa L."/>
            <person name="Sheng Y."/>
            <person name="Shibata Y."/>
            <person name="Shimada H."/>
            <person name="Shimada K."/>
            <person name="Silva D."/>
            <person name="Sinclair B."/>
            <person name="Sperling S."/>
            <person name="Stupka E."/>
            <person name="Sugiura K."/>
            <person name="Sultana R."/>
            <person name="Takenaka Y."/>
            <person name="Taki K."/>
            <person name="Tammoja K."/>
            <person name="Tan S.L."/>
            <person name="Tang S."/>
            <person name="Taylor M.S."/>
            <person name="Tegner J."/>
            <person name="Teichmann S.A."/>
            <person name="Ueda H.R."/>
            <person name="van Nimwegen E."/>
            <person name="Verardo R."/>
            <person name="Wei C.L."/>
            <person name="Yagi K."/>
            <person name="Yamanishi H."/>
            <person name="Zabarovsky E."/>
            <person name="Zhu S."/>
            <person name="Zimmer A."/>
            <person name="Hide W."/>
            <person name="Bult C."/>
            <person name="Grimmond S.M."/>
            <person name="Teasdale R.D."/>
            <person name="Liu E.T."/>
            <person name="Brusic V."/>
            <person name="Quackenbush J."/>
            <person name="Wahlestedt C."/>
            <person name="Mattick J.S."/>
            <person name="Hume D.A."/>
            <person name="Kai C."/>
            <person name="Sasaki D."/>
            <person name="Tomaru Y."/>
            <person name="Fukuda S."/>
            <person name="Kanamori-Katayama M."/>
            <person name="Suzuki M."/>
            <person name="Aoki J."/>
            <person name="Arakawa T."/>
            <person name="Iida J."/>
            <person name="Imamura K."/>
            <person name="Itoh M."/>
            <person name="Kato T."/>
            <person name="Kawaji H."/>
            <person name="Kawagashira N."/>
            <person name="Kawashima T."/>
            <person name="Kojima M."/>
            <person name="Kondo S."/>
            <person name="Konno H."/>
            <person name="Nakano K."/>
            <person name="Ninomiya N."/>
            <person name="Nishio T."/>
            <person name="Okada M."/>
            <person name="Plessy C."/>
            <person name="Shibata K."/>
            <person name="Shiraki T."/>
            <person name="Suzuki S."/>
            <person name="Tagami M."/>
            <person name="Waki K."/>
            <person name="Watahiki A."/>
            <person name="Okamura-Oho Y."/>
            <person name="Suzuki H."/>
            <person name="Kawai J."/>
            <person name="Hayashizaki Y."/>
        </authorList>
    </citation>
    <scope>NUCLEOTIDE SEQUENCE [LARGE SCALE MRNA]</scope>
    <source>
        <strain>C57BL/6J</strain>
        <tissue>Stomach</tissue>
    </source>
</reference>
<reference key="2">
    <citation type="journal article" date="2004" name="Genome Res.">
        <title>The status, quality, and expansion of the NIH full-length cDNA project: the Mammalian Gene Collection (MGC).</title>
        <authorList>
            <consortium name="The MGC Project Team"/>
        </authorList>
    </citation>
    <scope>NUCLEOTIDE SEQUENCE [LARGE SCALE MRNA]</scope>
    <source>
        <strain>Czech II</strain>
        <tissue>Brain</tissue>
        <tissue>Mammary tumor</tissue>
    </source>
</reference>
<comment type="function">
    <text evidence="1">Involved in pre-mRNA splicing as a component of the spliceosome.</text>
</comment>
<comment type="subunit">
    <text evidence="1">Component of the spliceosome B complex.</text>
</comment>
<comment type="subcellular location">
    <subcellularLocation>
        <location evidence="1">Nucleus</location>
    </subcellularLocation>
</comment>